<gene>
    <name evidence="1" type="primary">gatB</name>
    <name type="ordered locus">lpg1737</name>
</gene>
<sequence length="477" mass="53618">MEWDTVIGLEVHAQLKTKSKLFSGASTAFGATPNSQTSFIDAGLPGVLPVLNEQAIIMAIQFGLAIHGTINDLSVFERKNYFYPDLPKGYQISQYQKPIVTNGYLNIQLGNNLEKTVHIARAHLEEDAGKSLHDAHTDYTGIDLNRAGTPLLEIVTTPCLYSAEEAINYLKTLHQLVRFLGICDGNMQEGSFRCDVNLSIKPKGSSVLGTRTELKNLNSFRFIEKAIAFEQARHQDILESGLSVIQETRLYNPDNNTTQAMRGKENENDYRYFPDPDLLPIHIDKEQVEEIKNNLPDLPEAISKELKNTPSLNDEDINFILSSPDTYQYYKKIKSLCPAADKTIINWLKGQYAAFLNEHNLTFETPPISAKTMAAFLSKIHEKKISSSIAKNIFSMLCTGEKDIDAIIEREGYQQQNDNSALEEIVEQIIKQYPEQVTEYKAGKEKLLAFFIGQAMKQTKGKANPEQINLLLKKHLG</sequence>
<keyword id="KW-0067">ATP-binding</keyword>
<keyword id="KW-0436">Ligase</keyword>
<keyword id="KW-0547">Nucleotide-binding</keyword>
<keyword id="KW-0648">Protein biosynthesis</keyword>
<keyword id="KW-1185">Reference proteome</keyword>
<feature type="chain" id="PRO_0000241235" description="Aspartyl/glutamyl-tRNA(Asn/Gln) amidotransferase subunit B">
    <location>
        <begin position="1"/>
        <end position="477"/>
    </location>
</feature>
<name>GATB_LEGPH</name>
<accession>Q5ZUQ6</accession>
<comment type="function">
    <text evidence="1">Allows the formation of correctly charged Asn-tRNA(Asn) or Gln-tRNA(Gln) through the transamidation of misacylated Asp-tRNA(Asn) or Glu-tRNA(Gln) in organisms which lack either or both of asparaginyl-tRNA or glutaminyl-tRNA synthetases. The reaction takes place in the presence of glutamine and ATP through an activated phospho-Asp-tRNA(Asn) or phospho-Glu-tRNA(Gln).</text>
</comment>
<comment type="catalytic activity">
    <reaction evidence="1">
        <text>L-glutamyl-tRNA(Gln) + L-glutamine + ATP + H2O = L-glutaminyl-tRNA(Gln) + L-glutamate + ADP + phosphate + H(+)</text>
        <dbReference type="Rhea" id="RHEA:17521"/>
        <dbReference type="Rhea" id="RHEA-COMP:9681"/>
        <dbReference type="Rhea" id="RHEA-COMP:9684"/>
        <dbReference type="ChEBI" id="CHEBI:15377"/>
        <dbReference type="ChEBI" id="CHEBI:15378"/>
        <dbReference type="ChEBI" id="CHEBI:29985"/>
        <dbReference type="ChEBI" id="CHEBI:30616"/>
        <dbReference type="ChEBI" id="CHEBI:43474"/>
        <dbReference type="ChEBI" id="CHEBI:58359"/>
        <dbReference type="ChEBI" id="CHEBI:78520"/>
        <dbReference type="ChEBI" id="CHEBI:78521"/>
        <dbReference type="ChEBI" id="CHEBI:456216"/>
    </reaction>
</comment>
<comment type="catalytic activity">
    <reaction evidence="1">
        <text>L-aspartyl-tRNA(Asn) + L-glutamine + ATP + H2O = L-asparaginyl-tRNA(Asn) + L-glutamate + ADP + phosphate + 2 H(+)</text>
        <dbReference type="Rhea" id="RHEA:14513"/>
        <dbReference type="Rhea" id="RHEA-COMP:9674"/>
        <dbReference type="Rhea" id="RHEA-COMP:9677"/>
        <dbReference type="ChEBI" id="CHEBI:15377"/>
        <dbReference type="ChEBI" id="CHEBI:15378"/>
        <dbReference type="ChEBI" id="CHEBI:29985"/>
        <dbReference type="ChEBI" id="CHEBI:30616"/>
        <dbReference type="ChEBI" id="CHEBI:43474"/>
        <dbReference type="ChEBI" id="CHEBI:58359"/>
        <dbReference type="ChEBI" id="CHEBI:78515"/>
        <dbReference type="ChEBI" id="CHEBI:78516"/>
        <dbReference type="ChEBI" id="CHEBI:456216"/>
    </reaction>
</comment>
<comment type="subunit">
    <text evidence="1">Heterotrimer of A, B and C subunits.</text>
</comment>
<comment type="similarity">
    <text evidence="1">Belongs to the GatB/GatE family. GatB subfamily.</text>
</comment>
<evidence type="ECO:0000255" key="1">
    <source>
        <dbReference type="HAMAP-Rule" id="MF_00121"/>
    </source>
</evidence>
<organism>
    <name type="scientific">Legionella pneumophila subsp. pneumophila (strain Philadelphia 1 / ATCC 33152 / DSM 7513)</name>
    <dbReference type="NCBI Taxonomy" id="272624"/>
    <lineage>
        <taxon>Bacteria</taxon>
        <taxon>Pseudomonadati</taxon>
        <taxon>Pseudomonadota</taxon>
        <taxon>Gammaproteobacteria</taxon>
        <taxon>Legionellales</taxon>
        <taxon>Legionellaceae</taxon>
        <taxon>Legionella</taxon>
    </lineage>
</organism>
<reference key="1">
    <citation type="journal article" date="2004" name="Science">
        <title>The genomic sequence of the accidental pathogen Legionella pneumophila.</title>
        <authorList>
            <person name="Chien M."/>
            <person name="Morozova I."/>
            <person name="Shi S."/>
            <person name="Sheng H."/>
            <person name="Chen J."/>
            <person name="Gomez S.M."/>
            <person name="Asamani G."/>
            <person name="Hill K."/>
            <person name="Nuara J."/>
            <person name="Feder M."/>
            <person name="Rineer J."/>
            <person name="Greenberg J.J."/>
            <person name="Steshenko V."/>
            <person name="Park S.H."/>
            <person name="Zhao B."/>
            <person name="Teplitskaya E."/>
            <person name="Edwards J.R."/>
            <person name="Pampou S."/>
            <person name="Georghiou A."/>
            <person name="Chou I.-C."/>
            <person name="Iannuccilli W."/>
            <person name="Ulz M.E."/>
            <person name="Kim D.H."/>
            <person name="Geringer-Sameth A."/>
            <person name="Goldsberry C."/>
            <person name="Morozov P."/>
            <person name="Fischer S.G."/>
            <person name="Segal G."/>
            <person name="Qu X."/>
            <person name="Rzhetsky A."/>
            <person name="Zhang P."/>
            <person name="Cayanis E."/>
            <person name="De Jong P.J."/>
            <person name="Ju J."/>
            <person name="Kalachikov S."/>
            <person name="Shuman H.A."/>
            <person name="Russo J.J."/>
        </authorList>
    </citation>
    <scope>NUCLEOTIDE SEQUENCE [LARGE SCALE GENOMIC DNA]</scope>
    <source>
        <strain>Philadelphia 1 / ATCC 33152 / DSM 7513</strain>
    </source>
</reference>
<protein>
    <recommendedName>
        <fullName evidence="1">Aspartyl/glutamyl-tRNA(Asn/Gln) amidotransferase subunit B</fullName>
        <shortName evidence="1">Asp/Glu-ADT subunit B</shortName>
        <ecNumber evidence="1">6.3.5.-</ecNumber>
    </recommendedName>
</protein>
<dbReference type="EC" id="6.3.5.-" evidence="1"/>
<dbReference type="EMBL" id="AE017354">
    <property type="protein sequence ID" value="AAU27816.1"/>
    <property type="molecule type" value="Genomic_DNA"/>
</dbReference>
<dbReference type="RefSeq" id="WP_010947463.1">
    <property type="nucleotide sequence ID" value="NC_002942.5"/>
</dbReference>
<dbReference type="RefSeq" id="YP_095763.1">
    <property type="nucleotide sequence ID" value="NC_002942.5"/>
</dbReference>
<dbReference type="SMR" id="Q5ZUQ6"/>
<dbReference type="STRING" id="272624.lpg1737"/>
<dbReference type="PaxDb" id="272624-lpg1737"/>
<dbReference type="GeneID" id="57035726"/>
<dbReference type="KEGG" id="lpn:lpg1737"/>
<dbReference type="PATRIC" id="fig|272624.6.peg.1820"/>
<dbReference type="eggNOG" id="COG0064">
    <property type="taxonomic scope" value="Bacteria"/>
</dbReference>
<dbReference type="HOGENOM" id="CLU_019240_0_0_6"/>
<dbReference type="OrthoDB" id="9804078at2"/>
<dbReference type="Proteomes" id="UP000000609">
    <property type="component" value="Chromosome"/>
</dbReference>
<dbReference type="GO" id="GO:0050566">
    <property type="term" value="F:asparaginyl-tRNA synthase (glutamine-hydrolyzing) activity"/>
    <property type="evidence" value="ECO:0007669"/>
    <property type="project" value="RHEA"/>
</dbReference>
<dbReference type="GO" id="GO:0005524">
    <property type="term" value="F:ATP binding"/>
    <property type="evidence" value="ECO:0007669"/>
    <property type="project" value="UniProtKB-KW"/>
</dbReference>
<dbReference type="GO" id="GO:0050567">
    <property type="term" value="F:glutaminyl-tRNA synthase (glutamine-hydrolyzing) activity"/>
    <property type="evidence" value="ECO:0007669"/>
    <property type="project" value="UniProtKB-UniRule"/>
</dbReference>
<dbReference type="GO" id="GO:0070681">
    <property type="term" value="P:glutaminyl-tRNAGln biosynthesis via transamidation"/>
    <property type="evidence" value="ECO:0007669"/>
    <property type="project" value="TreeGrafter"/>
</dbReference>
<dbReference type="GO" id="GO:0006412">
    <property type="term" value="P:translation"/>
    <property type="evidence" value="ECO:0007669"/>
    <property type="project" value="UniProtKB-UniRule"/>
</dbReference>
<dbReference type="FunFam" id="1.10.10.410:FF:000001">
    <property type="entry name" value="Aspartyl/glutamyl-tRNA(Asn/Gln) amidotransferase subunit B"/>
    <property type="match status" value="1"/>
</dbReference>
<dbReference type="Gene3D" id="1.10.10.410">
    <property type="match status" value="1"/>
</dbReference>
<dbReference type="HAMAP" id="MF_00121">
    <property type="entry name" value="GatB"/>
    <property type="match status" value="1"/>
</dbReference>
<dbReference type="InterPro" id="IPR017959">
    <property type="entry name" value="Asn/Gln-tRNA_amidoTrfase_suB/E"/>
</dbReference>
<dbReference type="InterPro" id="IPR006075">
    <property type="entry name" value="Asn/Gln-tRNA_Trfase_suB/E_cat"/>
</dbReference>
<dbReference type="InterPro" id="IPR018027">
    <property type="entry name" value="Asn/Gln_amidotransferase"/>
</dbReference>
<dbReference type="InterPro" id="IPR003789">
    <property type="entry name" value="Asn/Gln_tRNA_amidoTrase-B-like"/>
</dbReference>
<dbReference type="InterPro" id="IPR004413">
    <property type="entry name" value="GatB"/>
</dbReference>
<dbReference type="InterPro" id="IPR023168">
    <property type="entry name" value="GatB_Yqey_C_2"/>
</dbReference>
<dbReference type="InterPro" id="IPR017958">
    <property type="entry name" value="Gln-tRNA_amidoTrfase_suB_CS"/>
</dbReference>
<dbReference type="InterPro" id="IPR014746">
    <property type="entry name" value="Gln_synth/guanido_kin_cat_dom"/>
</dbReference>
<dbReference type="NCBIfam" id="TIGR00133">
    <property type="entry name" value="gatB"/>
    <property type="match status" value="1"/>
</dbReference>
<dbReference type="NCBIfam" id="NF004012">
    <property type="entry name" value="PRK05477.1-2"/>
    <property type="match status" value="1"/>
</dbReference>
<dbReference type="NCBIfam" id="NF004014">
    <property type="entry name" value="PRK05477.1-4"/>
    <property type="match status" value="1"/>
</dbReference>
<dbReference type="PANTHER" id="PTHR11659">
    <property type="entry name" value="GLUTAMYL-TRNA GLN AMIDOTRANSFERASE SUBUNIT B MITOCHONDRIAL AND PROKARYOTIC PET112-RELATED"/>
    <property type="match status" value="1"/>
</dbReference>
<dbReference type="PANTHER" id="PTHR11659:SF0">
    <property type="entry name" value="GLUTAMYL-TRNA(GLN) AMIDOTRANSFERASE SUBUNIT B, MITOCHONDRIAL"/>
    <property type="match status" value="1"/>
</dbReference>
<dbReference type="Pfam" id="PF02934">
    <property type="entry name" value="GatB_N"/>
    <property type="match status" value="1"/>
</dbReference>
<dbReference type="Pfam" id="PF02637">
    <property type="entry name" value="GatB_Yqey"/>
    <property type="match status" value="1"/>
</dbReference>
<dbReference type="SMART" id="SM00845">
    <property type="entry name" value="GatB_Yqey"/>
    <property type="match status" value="1"/>
</dbReference>
<dbReference type="SUPFAM" id="SSF89095">
    <property type="entry name" value="GatB/YqeY motif"/>
    <property type="match status" value="1"/>
</dbReference>
<dbReference type="SUPFAM" id="SSF55931">
    <property type="entry name" value="Glutamine synthetase/guanido kinase"/>
    <property type="match status" value="1"/>
</dbReference>
<dbReference type="PROSITE" id="PS01234">
    <property type="entry name" value="GATB"/>
    <property type="match status" value="1"/>
</dbReference>
<proteinExistence type="inferred from homology"/>